<name>VATA_MOUSE</name>
<keyword id="KW-0002">3D-structure</keyword>
<keyword id="KW-0025">Alternative splicing</keyword>
<keyword id="KW-0067">ATP-binding</keyword>
<keyword id="KW-0963">Cytoplasm</keyword>
<keyword id="KW-0968">Cytoplasmic vesicle</keyword>
<keyword id="KW-0903">Direct protein sequencing</keyword>
<keyword id="KW-0375">Hydrogen ion transport</keyword>
<keyword id="KW-0406">Ion transport</keyword>
<keyword id="KW-0458">Lysosome</keyword>
<keyword id="KW-0472">Membrane</keyword>
<keyword id="KW-0547">Nucleotide-binding</keyword>
<keyword id="KW-0597">Phosphoprotein</keyword>
<keyword id="KW-1185">Reference proteome</keyword>
<keyword id="KW-1278">Translocase</keyword>
<keyword id="KW-0813">Transport</keyword>
<accession>P50516</accession>
<accession>Q3TKS0</accession>
<accession>Q3U5W3</accession>
<accession>Q3U777</accession>
<accession>Q3UDZ9</accession>
<accession>Q3US31</accession>
<accession>Q8CHX2</accession>
<protein>
    <recommendedName>
        <fullName>V-type proton ATPase catalytic subunit A</fullName>
        <shortName>V-ATPase subunit A</shortName>
        <ecNumber evidence="5">7.1.2.2</ecNumber>
    </recommendedName>
    <alternativeName>
        <fullName>V-ATPase 69 kDa subunit</fullName>
    </alternativeName>
    <alternativeName>
        <fullName>Vacuolar proton pump subunit alpha</fullName>
    </alternativeName>
</protein>
<feature type="chain" id="PRO_0000144561" description="V-type proton ATPase catalytic subunit A">
    <location>
        <begin position="1"/>
        <end position="617"/>
    </location>
</feature>
<feature type="binding site" evidence="3">
    <location>
        <begin position="250"/>
        <end position="257"/>
    </location>
    <ligand>
        <name>ATP</name>
        <dbReference type="ChEBI" id="CHEBI:30616"/>
    </ligand>
</feature>
<feature type="modified residue" description="Phosphoserine; by AMPK" evidence="5">
    <location>
        <position position="384"/>
    </location>
</feature>
<feature type="splice variant" id="VSP_024628" description="In isoform 2." evidence="7">
    <original>ASLAETDKITL</original>
    <variation>VRGGCTGCHAG</variation>
    <location>
        <begin position="499"/>
        <end position="509"/>
    </location>
</feature>
<feature type="splice variant" id="VSP_024629" description="In isoform 2." evidence="7">
    <location>
        <begin position="510"/>
        <end position="617"/>
    </location>
</feature>
<feature type="mutagenesis site" description="Significant loss in AMPK-mediated phosphorylation." evidence="5">
    <original>S</original>
    <variation>A</variation>
    <location>
        <position position="384"/>
    </location>
</feature>
<feature type="mutagenesis site" description="Reduces the interaction with CRYAB and MTOR." evidence="6">
    <original>S</original>
    <variation>A</variation>
    <location>
        <position position="411"/>
    </location>
</feature>
<feature type="sequence conflict" description="In Ref. 1; AAC52410." evidence="8" ref="1">
    <original>L</original>
    <variation>R</variation>
    <location>
        <position position="86"/>
    </location>
</feature>
<feature type="sequence conflict" description="In Ref. 1; AAC52410." evidence="8" ref="1">
    <original>D</original>
    <variation>N</variation>
    <location>
        <position position="189"/>
    </location>
</feature>
<feature type="sequence conflict" description="In Ref. 1; AAC52410." evidence="8" ref="1">
    <original>V</original>
    <variation>A</variation>
    <location>
        <position position="302"/>
    </location>
</feature>
<feature type="sequence conflict" description="In Ref. 2; BAE39074." evidence="8" ref="2">
    <original>G</original>
    <variation>V</variation>
    <location>
        <position position="330"/>
    </location>
</feature>
<feature type="sequence conflict" description="In Ref. 1; AAC52410." evidence="8" ref="1">
    <original>E</original>
    <variation>G</variation>
    <location>
        <position position="487"/>
    </location>
</feature>
<feature type="sequence conflict" description="In Ref. 2; BAE31963." evidence="8" ref="2">
    <original>E</original>
    <variation>G</variation>
    <location>
        <position position="616"/>
    </location>
</feature>
<proteinExistence type="evidence at protein level"/>
<reference key="1">
    <citation type="journal article" date="1996" name="Mol. Biol. Cell">
        <title>Resorption-cycle-dependent polarization of mRNAs for different subunits of V-ATPase in bone-resorbing osteoclasts.</title>
        <authorList>
            <person name="Laitala T."/>
            <person name="Howell M.L."/>
            <person name="Dean G.E."/>
            <person name="Vaananen H.K."/>
        </authorList>
    </citation>
    <scope>NUCLEOTIDE SEQUENCE [GENOMIC DNA]</scope>
</reference>
<reference key="2">
    <citation type="journal article" date="2005" name="Science">
        <title>The transcriptional landscape of the mammalian genome.</title>
        <authorList>
            <person name="Carninci P."/>
            <person name="Kasukawa T."/>
            <person name="Katayama S."/>
            <person name="Gough J."/>
            <person name="Frith M.C."/>
            <person name="Maeda N."/>
            <person name="Oyama R."/>
            <person name="Ravasi T."/>
            <person name="Lenhard B."/>
            <person name="Wells C."/>
            <person name="Kodzius R."/>
            <person name="Shimokawa K."/>
            <person name="Bajic V.B."/>
            <person name="Brenner S.E."/>
            <person name="Batalov S."/>
            <person name="Forrest A.R."/>
            <person name="Zavolan M."/>
            <person name="Davis M.J."/>
            <person name="Wilming L.G."/>
            <person name="Aidinis V."/>
            <person name="Allen J.E."/>
            <person name="Ambesi-Impiombato A."/>
            <person name="Apweiler R."/>
            <person name="Aturaliya R.N."/>
            <person name="Bailey T.L."/>
            <person name="Bansal M."/>
            <person name="Baxter L."/>
            <person name="Beisel K.W."/>
            <person name="Bersano T."/>
            <person name="Bono H."/>
            <person name="Chalk A.M."/>
            <person name="Chiu K.P."/>
            <person name="Choudhary V."/>
            <person name="Christoffels A."/>
            <person name="Clutterbuck D.R."/>
            <person name="Crowe M.L."/>
            <person name="Dalla E."/>
            <person name="Dalrymple B.P."/>
            <person name="de Bono B."/>
            <person name="Della Gatta G."/>
            <person name="di Bernardo D."/>
            <person name="Down T."/>
            <person name="Engstrom P."/>
            <person name="Fagiolini M."/>
            <person name="Faulkner G."/>
            <person name="Fletcher C.F."/>
            <person name="Fukushima T."/>
            <person name="Furuno M."/>
            <person name="Futaki S."/>
            <person name="Gariboldi M."/>
            <person name="Georgii-Hemming P."/>
            <person name="Gingeras T.R."/>
            <person name="Gojobori T."/>
            <person name="Green R.E."/>
            <person name="Gustincich S."/>
            <person name="Harbers M."/>
            <person name="Hayashi Y."/>
            <person name="Hensch T.K."/>
            <person name="Hirokawa N."/>
            <person name="Hill D."/>
            <person name="Huminiecki L."/>
            <person name="Iacono M."/>
            <person name="Ikeo K."/>
            <person name="Iwama A."/>
            <person name="Ishikawa T."/>
            <person name="Jakt M."/>
            <person name="Kanapin A."/>
            <person name="Katoh M."/>
            <person name="Kawasawa Y."/>
            <person name="Kelso J."/>
            <person name="Kitamura H."/>
            <person name="Kitano H."/>
            <person name="Kollias G."/>
            <person name="Krishnan S.P."/>
            <person name="Kruger A."/>
            <person name="Kummerfeld S.K."/>
            <person name="Kurochkin I.V."/>
            <person name="Lareau L.F."/>
            <person name="Lazarevic D."/>
            <person name="Lipovich L."/>
            <person name="Liu J."/>
            <person name="Liuni S."/>
            <person name="McWilliam S."/>
            <person name="Madan Babu M."/>
            <person name="Madera M."/>
            <person name="Marchionni L."/>
            <person name="Matsuda H."/>
            <person name="Matsuzawa S."/>
            <person name="Miki H."/>
            <person name="Mignone F."/>
            <person name="Miyake S."/>
            <person name="Morris K."/>
            <person name="Mottagui-Tabar S."/>
            <person name="Mulder N."/>
            <person name="Nakano N."/>
            <person name="Nakauchi H."/>
            <person name="Ng P."/>
            <person name="Nilsson R."/>
            <person name="Nishiguchi S."/>
            <person name="Nishikawa S."/>
            <person name="Nori F."/>
            <person name="Ohara O."/>
            <person name="Okazaki Y."/>
            <person name="Orlando V."/>
            <person name="Pang K.C."/>
            <person name="Pavan W.J."/>
            <person name="Pavesi G."/>
            <person name="Pesole G."/>
            <person name="Petrovsky N."/>
            <person name="Piazza S."/>
            <person name="Reed J."/>
            <person name="Reid J.F."/>
            <person name="Ring B.Z."/>
            <person name="Ringwald M."/>
            <person name="Rost B."/>
            <person name="Ruan Y."/>
            <person name="Salzberg S.L."/>
            <person name="Sandelin A."/>
            <person name="Schneider C."/>
            <person name="Schoenbach C."/>
            <person name="Sekiguchi K."/>
            <person name="Semple C.A."/>
            <person name="Seno S."/>
            <person name="Sessa L."/>
            <person name="Sheng Y."/>
            <person name="Shibata Y."/>
            <person name="Shimada H."/>
            <person name="Shimada K."/>
            <person name="Silva D."/>
            <person name="Sinclair B."/>
            <person name="Sperling S."/>
            <person name="Stupka E."/>
            <person name="Sugiura K."/>
            <person name="Sultana R."/>
            <person name="Takenaka Y."/>
            <person name="Taki K."/>
            <person name="Tammoja K."/>
            <person name="Tan S.L."/>
            <person name="Tang S."/>
            <person name="Taylor M.S."/>
            <person name="Tegner J."/>
            <person name="Teichmann S.A."/>
            <person name="Ueda H.R."/>
            <person name="van Nimwegen E."/>
            <person name="Verardo R."/>
            <person name="Wei C.L."/>
            <person name="Yagi K."/>
            <person name="Yamanishi H."/>
            <person name="Zabarovsky E."/>
            <person name="Zhu S."/>
            <person name="Zimmer A."/>
            <person name="Hide W."/>
            <person name="Bult C."/>
            <person name="Grimmond S.M."/>
            <person name="Teasdale R.D."/>
            <person name="Liu E.T."/>
            <person name="Brusic V."/>
            <person name="Quackenbush J."/>
            <person name="Wahlestedt C."/>
            <person name="Mattick J.S."/>
            <person name="Hume D.A."/>
            <person name="Kai C."/>
            <person name="Sasaki D."/>
            <person name="Tomaru Y."/>
            <person name="Fukuda S."/>
            <person name="Kanamori-Katayama M."/>
            <person name="Suzuki M."/>
            <person name="Aoki J."/>
            <person name="Arakawa T."/>
            <person name="Iida J."/>
            <person name="Imamura K."/>
            <person name="Itoh M."/>
            <person name="Kato T."/>
            <person name="Kawaji H."/>
            <person name="Kawagashira N."/>
            <person name="Kawashima T."/>
            <person name="Kojima M."/>
            <person name="Kondo S."/>
            <person name="Konno H."/>
            <person name="Nakano K."/>
            <person name="Ninomiya N."/>
            <person name="Nishio T."/>
            <person name="Okada M."/>
            <person name="Plessy C."/>
            <person name="Shibata K."/>
            <person name="Shiraki T."/>
            <person name="Suzuki S."/>
            <person name="Tagami M."/>
            <person name="Waki K."/>
            <person name="Watahiki A."/>
            <person name="Okamura-Oho Y."/>
            <person name="Suzuki H."/>
            <person name="Kawai J."/>
            <person name="Hayashizaki Y."/>
        </authorList>
    </citation>
    <scope>NUCLEOTIDE SEQUENCE [LARGE SCALE MRNA] (ISOFORMS 1 AND 2)</scope>
    <source>
        <strain>C57BL/6J</strain>
        <strain>NOD</strain>
        <tissue>Bone marrow</tissue>
        <tissue>Head</tissue>
    </source>
</reference>
<reference key="3">
    <citation type="journal article" date="2004" name="Genome Res.">
        <title>The status, quality, and expansion of the NIH full-length cDNA project: the Mammalian Gene Collection (MGC).</title>
        <authorList>
            <consortium name="The MGC Project Team"/>
        </authorList>
    </citation>
    <scope>NUCLEOTIDE SEQUENCE [LARGE SCALE MRNA] (ISOFORM 1)</scope>
    <source>
        <strain>Czech II</strain>
        <tissue>Mammary tumor</tissue>
    </source>
</reference>
<reference key="4">
    <citation type="submission" date="2007-04" db="UniProtKB">
        <authorList>
            <person name="Lubec G."/>
            <person name="Klug S."/>
            <person name="Kang S.U."/>
        </authorList>
    </citation>
    <scope>PROTEIN SEQUENCE OF 45-56; 143-163; 242-251; 253-262; 266-280; 324-338; 514-530 AND 599-613</scope>
    <scope>IDENTIFICATION BY MASS SPECTROMETRY</scope>
    <source>
        <strain>C57BL/6J</strain>
        <tissue>Brain</tissue>
        <tissue>Hippocampus</tissue>
    </source>
</reference>
<reference key="5">
    <citation type="journal article" date="2001" name="J. Biol. Chem.">
        <title>Molecular cloning and characterization of Atp6n1b: a novel fourth murine vacuolar H+-ATPase a-subunit gene.</title>
        <authorList>
            <person name="Smith A.N."/>
            <person name="Finberg K.E."/>
            <person name="Wagner C.A."/>
            <person name="Lifton R.P."/>
            <person name="Devonald M.A."/>
            <person name="Su Y."/>
            <person name="Karet F.E."/>
        </authorList>
    </citation>
    <scope>INTERACTION WITH ATP6V0A4</scope>
    <source>
        <strain>NOD</strain>
        <tissue>Kidney</tissue>
    </source>
</reference>
<reference key="6">
    <citation type="journal article" date="2007" name="Mol. Cell. Proteomics">
        <title>Qualitative and quantitative analyses of protein phosphorylation in naive and stimulated mouse synaptosomal preparations.</title>
        <authorList>
            <person name="Munton R.P."/>
            <person name="Tweedie-Cullen R."/>
            <person name="Livingstone-Zatchej M."/>
            <person name="Weinandy F."/>
            <person name="Waidelich M."/>
            <person name="Longo D."/>
            <person name="Gehrig P."/>
            <person name="Potthast F."/>
            <person name="Rutishauser D."/>
            <person name="Gerrits B."/>
            <person name="Panse C."/>
            <person name="Schlapbach R."/>
            <person name="Mansuy I.M."/>
        </authorList>
    </citation>
    <scope>IDENTIFICATION BY MASS SPECTROMETRY [LARGE SCALE ANALYSIS]</scope>
    <source>
        <tissue>Brain cortex</tissue>
    </source>
</reference>
<reference key="7">
    <citation type="journal article" date="2008" name="J. Proteome Res.">
        <title>Large-scale identification and evolution indexing of tyrosine phosphorylation sites from murine brain.</title>
        <authorList>
            <person name="Ballif B.A."/>
            <person name="Carey G.R."/>
            <person name="Sunyaev S.R."/>
            <person name="Gygi S.P."/>
        </authorList>
    </citation>
    <scope>IDENTIFICATION BY MASS SPECTROMETRY [LARGE SCALE ANALYSIS]</scope>
    <source>
        <tissue>Brain</tissue>
    </source>
</reference>
<reference key="8">
    <citation type="journal article" date="2010" name="Cell">
        <title>A tissue-specific atlas of mouse protein phosphorylation and expression.</title>
        <authorList>
            <person name="Huttlin E.L."/>
            <person name="Jedrychowski M.P."/>
            <person name="Elias J.E."/>
            <person name="Goswami T."/>
            <person name="Rad R."/>
            <person name="Beausoleil S.A."/>
            <person name="Villen J."/>
            <person name="Haas W."/>
            <person name="Sowa M.E."/>
            <person name="Gygi S.P."/>
        </authorList>
    </citation>
    <scope>IDENTIFICATION BY MASS SPECTROMETRY [LARGE SCALE ANALYSIS]</scope>
    <source>
        <tissue>Brain</tissue>
        <tissue>Brown adipose tissue</tissue>
        <tissue>Heart</tissue>
        <tissue>Kidney</tissue>
        <tissue>Liver</tissue>
        <tissue>Lung</tissue>
        <tissue>Pancreas</tissue>
        <tissue>Spleen</tissue>
        <tissue>Testis</tissue>
    </source>
</reference>
<reference key="9">
    <citation type="journal article" date="2013" name="Am. J. Physiol.">
        <title>AMP-activated protein kinase regulates the vacuolar H+-ATPase via direct phosphorylation of the A subunit (ATP6V1A) in the kidney.</title>
        <authorList>
            <person name="Alzamora R."/>
            <person name="Al-Bataineh M.M."/>
            <person name="Liu W."/>
            <person name="Gong F."/>
            <person name="Li H."/>
            <person name="Thali R.F."/>
            <person name="Joho-Auchli Y."/>
            <person name="Brunisholz R.A."/>
            <person name="Satlin L.M."/>
            <person name="Neumann D."/>
            <person name="Hallows K.R."/>
            <person name="Pastor-Soler N.M."/>
        </authorList>
    </citation>
    <scope>FUNCTION</scope>
    <scope>CATALYTIC ACTIVITY</scope>
    <scope>SUBCELLULAR LOCATION</scope>
    <scope>PHOSPHORYLATION AT SER-384</scope>
    <scope>MUTAGENESIS OF SER-384</scope>
</reference>
<reference key="10">
    <citation type="journal article" date="2020" name="Biochim. Biophys. Acta">
        <title>Heat shock factor 4 regulates lysosome activity by modulating the alphaB-crystallin-ATP6V1A-mTOR complex in ocular lens.</title>
        <authorList>
            <person name="Cui X."/>
            <person name="Feng R."/>
            <person name="Wang J."/>
            <person name="Du C."/>
            <person name="Pi X."/>
            <person name="Chen D."/>
            <person name="Li J."/>
            <person name="Li H."/>
            <person name="Zhang J."/>
            <person name="Zhang J."/>
            <person name="Mu H."/>
            <person name="Zhang F."/>
            <person name="Liu M."/>
            <person name="Hu Y."/>
        </authorList>
    </citation>
    <scope>INTERACTION WITH CRYAB AND MTOR</scope>
    <scope>SUBCELLULAR LOCATION</scope>
    <scope>MUTAGENESIS OF SER-411</scope>
</reference>
<organism>
    <name type="scientific">Mus musculus</name>
    <name type="common">Mouse</name>
    <dbReference type="NCBI Taxonomy" id="10090"/>
    <lineage>
        <taxon>Eukaryota</taxon>
        <taxon>Metazoa</taxon>
        <taxon>Chordata</taxon>
        <taxon>Craniata</taxon>
        <taxon>Vertebrata</taxon>
        <taxon>Euteleostomi</taxon>
        <taxon>Mammalia</taxon>
        <taxon>Eutheria</taxon>
        <taxon>Euarchontoglires</taxon>
        <taxon>Glires</taxon>
        <taxon>Rodentia</taxon>
        <taxon>Myomorpha</taxon>
        <taxon>Muroidea</taxon>
        <taxon>Muridae</taxon>
        <taxon>Murinae</taxon>
        <taxon>Mus</taxon>
        <taxon>Mus</taxon>
    </lineage>
</organism>
<comment type="function">
    <text evidence="2 5">Catalytic subunit of the V1 complex of vacuolar(H+)-ATPase (V-ATPase), a multisubunit enzyme composed of a peripheral complex (V1) that hydrolyzes ATP and a membrane integral complex (V0) that translocates protons (PubMed:23863464). V-ATPase is responsible for acidifying and maintaining the pH of intracellular compartments and in some cell types, is targeted to the plasma membrane, where it is responsible for acidifying the extracellular environment (By similarity). In aerobic conditions, involved in intracellular iron homeostasis, thus triggering the activity of Fe(2+) prolyl hydroxylase (PHD) enzymes, and leading to HIF1A hydroxylation and subsequent proteasomal degradation (By similarity). May play a role in neurite development and synaptic connectivity (By similarity).</text>
</comment>
<comment type="catalytic activity">
    <reaction evidence="5">
        <text>ATP + H2O + 4 H(+)(in) = ADP + phosphate + 5 H(+)(out)</text>
        <dbReference type="Rhea" id="RHEA:57720"/>
        <dbReference type="ChEBI" id="CHEBI:15377"/>
        <dbReference type="ChEBI" id="CHEBI:15378"/>
        <dbReference type="ChEBI" id="CHEBI:30616"/>
        <dbReference type="ChEBI" id="CHEBI:43474"/>
        <dbReference type="ChEBI" id="CHEBI:456216"/>
        <dbReference type="EC" id="7.1.2.2"/>
    </reaction>
</comment>
<comment type="activity regulation">
    <text evidence="1">ATP hydrolysis occurs at the interface between the nucleotide-binding domains of subunits A and B (By similarity). ATP hydrolysis triggers a conformational change in the subunits D and F, which induces a shift of subunit d (By similarity). The c-ring is subsequently rotated and results in a continuous proton translocation across the membrane (By similarity).</text>
</comment>
<comment type="subunit">
    <text evidence="2 4 6">V-ATPase is a heteromultimeric enzyme made up of two complexes: the ATP-hydrolytic V1 complex and the proton translocation V0 complex (By similarity). The V1 complex consists of three catalytic AB heterodimers that form a heterohexamer, three peripheral stalks each consisting of EG heterodimers, one central rotor including subunits D and F, and the regulatory subunits C and H (By similarity). The proton translocation complex V0 consists of the proton transport subunit a, a ring of proteolipid subunits c9c'', rotary subunit d, subunits e and f, and the accessory subunits ATP6AP1/Ac45 and ATP6AP2/PRR (By similarity). Interacts with the V0 complex V-ATPase subunit a4 ATP6V0A4 (PubMed:11495928). Interacts with WFS1 (By similarity). Interacts with alpha-crystallin B chain/CRYAB and with MTOR, forming a ternary complex (PubMed:31786107).</text>
</comment>
<comment type="subcellular location">
    <subcellularLocation>
        <location evidence="5">Cytoplasm</location>
    </subcellularLocation>
    <subcellularLocation>
        <location evidence="6">Cytoplasm</location>
        <location evidence="6">Cytosol</location>
    </subcellularLocation>
    <subcellularLocation>
        <location evidence="2">Cytoplasmic vesicle</location>
        <location evidence="2">Secretory vesicle</location>
    </subcellularLocation>
    <subcellularLocation>
        <location evidence="1">Cytoplasmic vesicle</location>
        <location evidence="1">Clathrin-coated vesicle membrane</location>
        <topology evidence="8">Peripheral membrane protein</topology>
    </subcellularLocation>
    <subcellularLocation>
        <location evidence="6">Lysosome</location>
    </subcellularLocation>
    <text evidence="2">Co-localizes with WFS1 in the secretory granules in neuroblastoma cell lines.</text>
</comment>
<comment type="alternative products">
    <event type="alternative splicing"/>
    <isoform>
        <id>P50516-1</id>
        <name>1</name>
        <sequence type="displayed"/>
    </isoform>
    <isoform>
        <id>P50516-2</id>
        <name>2</name>
        <sequence type="described" ref="VSP_024628 VSP_024629"/>
    </isoform>
</comment>
<comment type="PTM">
    <text evidence="5">Phosphorylation at Ser-384 by AMPK down-regulates its enzyme activity.</text>
</comment>
<comment type="similarity">
    <text evidence="8">Belongs to the ATPase alpha/beta chains family.</text>
</comment>
<gene>
    <name type="primary">Atp6v1a</name>
    <name type="synonym">Atp6a1</name>
    <name type="synonym">Atp6a2</name>
    <name type="synonym">Atp6v1a1</name>
</gene>
<evidence type="ECO:0000250" key="1">
    <source>
        <dbReference type="UniProtKB" id="P31404"/>
    </source>
</evidence>
<evidence type="ECO:0000250" key="2">
    <source>
        <dbReference type="UniProtKB" id="P38606"/>
    </source>
</evidence>
<evidence type="ECO:0000255" key="3"/>
<evidence type="ECO:0000269" key="4">
    <source>
    </source>
</evidence>
<evidence type="ECO:0000269" key="5">
    <source>
    </source>
</evidence>
<evidence type="ECO:0000269" key="6">
    <source>
    </source>
</evidence>
<evidence type="ECO:0000303" key="7">
    <source>
    </source>
</evidence>
<evidence type="ECO:0000305" key="8"/>
<sequence>MDFSKLPKIRDEDKESTFGYVHGVSGPVVTACDMAGAAMYELVRVGHSELVGEIIRLEGDMATIQVYEETSGVSVGDPVLRTGKPLSVELGPGIMGAIFDGIQRPLSDISSQTQSIYIPRGVNVSALSRDIKWEFIPSKNLRVGSHITGGDIYGIVNENSLIKHKIMLPPRNRGSVTYIAPPGNYDASDVVLELEFEGVKEKFSMVQVWPVRQVRPVTEKLPANHPLLTGQRVLDALFPCVQGGTTAIPGAFGCGKTVISQSLSKYSNSDVIIYVGCGERGNEMSEVLRDFPELTMEVDGKVESIMKRTALVANTSNMPVAAREASIYTGITLSEYFRDMGYHVSMMADSTSRWAEALREISGRLAEMPADSGYPAYLGARLASFYERAGRVKCLGNPEREGSVSIVGAVSPPGGDFSDPVTSATLGIVQVFWGLDKKLAQRKHFPSVNWLISYSKYMRALDEYYDKHFTEFVPLRTKAKEILQEEEDLAEIVQLVGKASLAETDKITLEVAKLIKDDFLQQNGYTPYDRFCPFYKTVGMLSNMISFYDMARRAVETTAQSDNKITWSIIREHMGEILYKLSSMKFKDPVKDGEAKIKADYAQLLEDMQNAFRSLED</sequence>
<dbReference type="EC" id="7.1.2.2" evidence="5"/>
<dbReference type="EMBL" id="U13837">
    <property type="protein sequence ID" value="AAC52410.1"/>
    <property type="molecule type" value="Genomic_DNA"/>
</dbReference>
<dbReference type="EMBL" id="AK140873">
    <property type="protein sequence ID" value="BAE24506.1"/>
    <property type="molecule type" value="mRNA"/>
</dbReference>
<dbReference type="EMBL" id="AK149833">
    <property type="protein sequence ID" value="BAE29112.1"/>
    <property type="molecule type" value="mRNA"/>
</dbReference>
<dbReference type="EMBL" id="AK152785">
    <property type="protein sequence ID" value="BAE31494.1"/>
    <property type="molecule type" value="mRNA"/>
</dbReference>
<dbReference type="EMBL" id="AK153403">
    <property type="protein sequence ID" value="BAE31963.1"/>
    <property type="molecule type" value="mRNA"/>
</dbReference>
<dbReference type="EMBL" id="AK154869">
    <property type="protein sequence ID" value="BAE32890.1"/>
    <property type="molecule type" value="mRNA"/>
</dbReference>
<dbReference type="EMBL" id="AK160792">
    <property type="protein sequence ID" value="BAE36015.1"/>
    <property type="molecule type" value="mRNA"/>
</dbReference>
<dbReference type="EMBL" id="AK166857">
    <property type="protein sequence ID" value="BAE39074.1"/>
    <property type="molecule type" value="mRNA"/>
</dbReference>
<dbReference type="EMBL" id="AK170721">
    <property type="protein sequence ID" value="BAE41978.1"/>
    <property type="molecule type" value="mRNA"/>
</dbReference>
<dbReference type="EMBL" id="BC038392">
    <property type="protein sequence ID" value="AAH38392.1"/>
    <property type="molecule type" value="mRNA"/>
</dbReference>
<dbReference type="CCDS" id="CCDS28182.1">
    <molecule id="P50516-1"/>
</dbReference>
<dbReference type="RefSeq" id="NP_001345132.1">
    <molecule id="P50516-1"/>
    <property type="nucleotide sequence ID" value="NM_001358203.1"/>
</dbReference>
<dbReference type="RefSeq" id="NP_001345133.1">
    <molecule id="P50516-1"/>
    <property type="nucleotide sequence ID" value="NM_001358204.1"/>
</dbReference>
<dbReference type="RefSeq" id="NP_001400404.1">
    <molecule id="P50516-1"/>
    <property type="nucleotide sequence ID" value="NM_001413475.1"/>
</dbReference>
<dbReference type="RefSeq" id="NP_001400405.1">
    <molecule id="P50516-1"/>
    <property type="nucleotide sequence ID" value="NM_001413476.1"/>
</dbReference>
<dbReference type="RefSeq" id="NP_031534.2">
    <molecule id="P50516-1"/>
    <property type="nucleotide sequence ID" value="NM_007508.5"/>
</dbReference>
<dbReference type="RefSeq" id="XP_006521783.1">
    <property type="nucleotide sequence ID" value="XM_006521720.3"/>
</dbReference>
<dbReference type="RefSeq" id="XP_006521784.1">
    <property type="nucleotide sequence ID" value="XM_006521721.2"/>
</dbReference>
<dbReference type="RefSeq" id="XP_011244111.1">
    <property type="nucleotide sequence ID" value="XM_011245809.2"/>
</dbReference>
<dbReference type="PDB" id="9BRA">
    <property type="method" value="EM"/>
    <property type="resolution" value="4.30 A"/>
    <property type="chains" value="0/1/2=1-617"/>
</dbReference>
<dbReference type="PDB" id="9BRQ">
    <property type="method" value="EM"/>
    <property type="resolution" value="4.30 A"/>
    <property type="chains" value="0/1/2=1-617"/>
</dbReference>
<dbReference type="PDB" id="9BRR">
    <property type="method" value="EM"/>
    <property type="resolution" value="4.50 A"/>
    <property type="chains" value="0/1/2=1-617"/>
</dbReference>
<dbReference type="PDB" id="9BRS">
    <property type="method" value="EM"/>
    <property type="resolution" value="4.40 A"/>
    <property type="chains" value="0/1/2=1-617"/>
</dbReference>
<dbReference type="PDB" id="9BRT">
    <property type="method" value="EM"/>
    <property type="resolution" value="4.30 A"/>
    <property type="chains" value="0/1/2=1-617"/>
</dbReference>
<dbReference type="PDB" id="9BRU">
    <property type="method" value="EM"/>
    <property type="resolution" value="4.40 A"/>
    <property type="chains" value="0/1/2=1-617"/>
</dbReference>
<dbReference type="PDBsum" id="9BRA"/>
<dbReference type="PDBsum" id="9BRQ"/>
<dbReference type="PDBsum" id="9BRR"/>
<dbReference type="PDBsum" id="9BRS"/>
<dbReference type="PDBsum" id="9BRT"/>
<dbReference type="PDBsum" id="9BRU"/>
<dbReference type="EMDB" id="EMD-44839"/>
<dbReference type="EMDB" id="EMD-44840"/>
<dbReference type="EMDB" id="EMD-44841"/>
<dbReference type="EMDB" id="EMD-44842"/>
<dbReference type="EMDB" id="EMD-44843"/>
<dbReference type="EMDB" id="EMD-44844"/>
<dbReference type="SMR" id="P50516"/>
<dbReference type="BioGRID" id="198261">
    <property type="interactions" value="40"/>
</dbReference>
<dbReference type="FunCoup" id="P50516">
    <property type="interactions" value="3159"/>
</dbReference>
<dbReference type="IntAct" id="P50516">
    <property type="interactions" value="106"/>
</dbReference>
<dbReference type="MINT" id="P50516"/>
<dbReference type="STRING" id="10090.ENSMUSP00000110314"/>
<dbReference type="TCDB" id="3.A.2.2.6">
    <property type="family name" value="the h+- or na+-translocating f-type, v-type and a-type atpase (f-atpase) superfamily"/>
</dbReference>
<dbReference type="GlyGen" id="P50516">
    <property type="glycosylation" value="2 sites, 1 N-linked glycan (1 site), 1 O-linked glycan (1 site)"/>
</dbReference>
<dbReference type="iPTMnet" id="P50516"/>
<dbReference type="MetOSite" id="P50516"/>
<dbReference type="PhosphoSitePlus" id="P50516"/>
<dbReference type="SwissPalm" id="P50516"/>
<dbReference type="jPOST" id="P50516"/>
<dbReference type="PaxDb" id="10090-ENSMUSP00000110314"/>
<dbReference type="PeptideAtlas" id="P50516"/>
<dbReference type="ProteomicsDB" id="297534">
    <molecule id="P50516-1"/>
</dbReference>
<dbReference type="ProteomicsDB" id="297535">
    <molecule id="P50516-2"/>
</dbReference>
<dbReference type="Pumba" id="P50516"/>
<dbReference type="TopDownProteomics" id="P50516-1">
    <molecule id="P50516-1"/>
</dbReference>
<dbReference type="Antibodypedia" id="32600">
    <property type="antibodies" value="203 antibodies from 33 providers"/>
</dbReference>
<dbReference type="Ensembl" id="ENSMUST00000063661.13">
    <molecule id="P50516-1"/>
    <property type="protein sequence ID" value="ENSMUSP00000066886.7"/>
    <property type="gene ID" value="ENSMUSG00000052459.14"/>
</dbReference>
<dbReference type="Ensembl" id="ENSMUST00000114666.9">
    <molecule id="P50516-1"/>
    <property type="protein sequence ID" value="ENSMUSP00000110314.3"/>
    <property type="gene ID" value="ENSMUSG00000052459.14"/>
</dbReference>
<dbReference type="GeneID" id="11964"/>
<dbReference type="KEGG" id="mmu:11964"/>
<dbReference type="UCSC" id="uc007zgu.1">
    <molecule id="P50516-1"/>
    <property type="organism name" value="mouse"/>
</dbReference>
<dbReference type="UCSC" id="uc007zgw.1">
    <molecule id="P50516-2"/>
    <property type="organism name" value="mouse"/>
</dbReference>
<dbReference type="AGR" id="MGI:1201780"/>
<dbReference type="CTD" id="523"/>
<dbReference type="MGI" id="MGI:1201780">
    <property type="gene designation" value="Atp6v1a"/>
</dbReference>
<dbReference type="VEuPathDB" id="HostDB:ENSMUSG00000052459"/>
<dbReference type="eggNOG" id="KOG1352">
    <property type="taxonomic scope" value="Eukaryota"/>
</dbReference>
<dbReference type="GeneTree" id="ENSGT00550000074787"/>
<dbReference type="HOGENOM" id="CLU_008162_3_1_1"/>
<dbReference type="InParanoid" id="P50516"/>
<dbReference type="OMA" id="RIVKTFW"/>
<dbReference type="OrthoDB" id="1676488at2759"/>
<dbReference type="PhylomeDB" id="P50516"/>
<dbReference type="TreeFam" id="TF300811"/>
<dbReference type="Reactome" id="R-MMU-1222556">
    <property type="pathway name" value="ROS and RNS production in phagocytes"/>
</dbReference>
<dbReference type="Reactome" id="R-MMU-77387">
    <property type="pathway name" value="Insulin receptor recycling"/>
</dbReference>
<dbReference type="Reactome" id="R-MMU-917977">
    <property type="pathway name" value="Transferrin endocytosis and recycling"/>
</dbReference>
<dbReference type="Reactome" id="R-MMU-9639288">
    <property type="pathway name" value="Amino acids regulate mTORC1"/>
</dbReference>
<dbReference type="Reactome" id="R-MMU-983712">
    <property type="pathway name" value="Ion channel transport"/>
</dbReference>
<dbReference type="BioGRID-ORCS" id="11964">
    <property type="hits" value="23 hits in 77 CRISPR screens"/>
</dbReference>
<dbReference type="CD-CODE" id="CE726F99">
    <property type="entry name" value="Postsynaptic density"/>
</dbReference>
<dbReference type="ChiTaRS" id="Atp6v1a">
    <property type="organism name" value="mouse"/>
</dbReference>
<dbReference type="PRO" id="PR:P50516"/>
<dbReference type="Proteomes" id="UP000000589">
    <property type="component" value="Chromosome 16"/>
</dbReference>
<dbReference type="RNAct" id="P50516">
    <property type="molecule type" value="protein"/>
</dbReference>
<dbReference type="Bgee" id="ENSMUSG00000052459">
    <property type="expression patterns" value="Expressed in cingulate cortex and 266 other cell types or tissues"/>
</dbReference>
<dbReference type="ExpressionAtlas" id="P50516">
    <property type="expression patterns" value="baseline and differential"/>
</dbReference>
<dbReference type="GO" id="GO:0016324">
    <property type="term" value="C:apical plasma membrane"/>
    <property type="evidence" value="ECO:0000314"/>
    <property type="project" value="UniProtKB"/>
</dbReference>
<dbReference type="GO" id="GO:1904949">
    <property type="term" value="C:ATPase complex"/>
    <property type="evidence" value="ECO:0000314"/>
    <property type="project" value="MGI"/>
</dbReference>
<dbReference type="GO" id="GO:0030665">
    <property type="term" value="C:clathrin-coated vesicle membrane"/>
    <property type="evidence" value="ECO:0007669"/>
    <property type="project" value="UniProtKB-SubCell"/>
</dbReference>
<dbReference type="GO" id="GO:0005737">
    <property type="term" value="C:cytoplasm"/>
    <property type="evidence" value="ECO:0000314"/>
    <property type="project" value="UniProtKB"/>
</dbReference>
<dbReference type="GO" id="GO:0005829">
    <property type="term" value="C:cytosol"/>
    <property type="evidence" value="ECO:0000314"/>
    <property type="project" value="UniProtKB"/>
</dbReference>
<dbReference type="GO" id="GO:0098850">
    <property type="term" value="C:extrinsic component of synaptic vesicle membrane"/>
    <property type="evidence" value="ECO:0007669"/>
    <property type="project" value="Ensembl"/>
</dbReference>
<dbReference type="GO" id="GO:0005764">
    <property type="term" value="C:lysosome"/>
    <property type="evidence" value="ECO:0007669"/>
    <property type="project" value="UniProtKB-SubCell"/>
</dbReference>
<dbReference type="GO" id="GO:0005902">
    <property type="term" value="C:microvillus"/>
    <property type="evidence" value="ECO:0000314"/>
    <property type="project" value="UniProtKB"/>
</dbReference>
<dbReference type="GO" id="GO:0005739">
    <property type="term" value="C:mitochondrion"/>
    <property type="evidence" value="ECO:0007005"/>
    <property type="project" value="MGI"/>
</dbReference>
<dbReference type="GO" id="GO:0043209">
    <property type="term" value="C:myelin sheath"/>
    <property type="evidence" value="ECO:0007005"/>
    <property type="project" value="UniProtKB"/>
</dbReference>
<dbReference type="GO" id="GO:0005654">
    <property type="term" value="C:nucleoplasm"/>
    <property type="evidence" value="ECO:0007669"/>
    <property type="project" value="Ensembl"/>
</dbReference>
<dbReference type="GO" id="GO:0005886">
    <property type="term" value="C:plasma membrane"/>
    <property type="evidence" value="ECO:0000314"/>
    <property type="project" value="UniProtKB"/>
</dbReference>
<dbReference type="GO" id="GO:0033176">
    <property type="term" value="C:proton-transporting V-type ATPase complex"/>
    <property type="evidence" value="ECO:0000314"/>
    <property type="project" value="MGI"/>
</dbReference>
<dbReference type="GO" id="GO:0033180">
    <property type="term" value="C:proton-transporting V-type ATPase, V1 domain"/>
    <property type="evidence" value="ECO:0000314"/>
    <property type="project" value="MGI"/>
</dbReference>
<dbReference type="GO" id="GO:0030141">
    <property type="term" value="C:secretory granule"/>
    <property type="evidence" value="ECO:0007669"/>
    <property type="project" value="Ensembl"/>
</dbReference>
<dbReference type="GO" id="GO:0000221">
    <property type="term" value="C:vacuolar proton-transporting V-type ATPase, V1 domain"/>
    <property type="evidence" value="ECO:0000250"/>
    <property type="project" value="UniProtKB"/>
</dbReference>
<dbReference type="GO" id="GO:0005524">
    <property type="term" value="F:ATP binding"/>
    <property type="evidence" value="ECO:0007669"/>
    <property type="project" value="UniProtKB-KW"/>
</dbReference>
<dbReference type="GO" id="GO:0016887">
    <property type="term" value="F:ATP hydrolysis activity"/>
    <property type="evidence" value="ECO:0007669"/>
    <property type="project" value="InterPro"/>
</dbReference>
<dbReference type="GO" id="GO:0046961">
    <property type="term" value="F:proton-transporting ATPase activity, rotational mechanism"/>
    <property type="evidence" value="ECO:0000315"/>
    <property type="project" value="UniProtKB"/>
</dbReference>
<dbReference type="GO" id="GO:0046034">
    <property type="term" value="P:ATP metabolic process"/>
    <property type="evidence" value="ECO:0007669"/>
    <property type="project" value="InterPro"/>
</dbReference>
<dbReference type="GO" id="GO:0036295">
    <property type="term" value="P:cellular response to increased oxygen levels"/>
    <property type="evidence" value="ECO:0000250"/>
    <property type="project" value="UniProtKB"/>
</dbReference>
<dbReference type="GO" id="GO:0006879">
    <property type="term" value="P:intracellular iron ion homeostasis"/>
    <property type="evidence" value="ECO:0000250"/>
    <property type="project" value="UniProtKB"/>
</dbReference>
<dbReference type="GO" id="GO:0097401">
    <property type="term" value="P:synaptic vesicle lumen acidification"/>
    <property type="evidence" value="ECO:0000314"/>
    <property type="project" value="SynGO"/>
</dbReference>
<dbReference type="CDD" id="cd18111">
    <property type="entry name" value="ATP-synt_V_A-type_alpha_C"/>
    <property type="match status" value="1"/>
</dbReference>
<dbReference type="CDD" id="cd18119">
    <property type="entry name" value="ATP-synt_V_A-type_alpha_N"/>
    <property type="match status" value="1"/>
</dbReference>
<dbReference type="CDD" id="cd01134">
    <property type="entry name" value="V_A-ATPase_A"/>
    <property type="match status" value="1"/>
</dbReference>
<dbReference type="FunFam" id="1.10.1140.10:FF:000002">
    <property type="entry name" value="V-type proton ATPase catalytic subunit A"/>
    <property type="match status" value="1"/>
</dbReference>
<dbReference type="FunFam" id="2.40.30.20:FF:000002">
    <property type="entry name" value="V-type proton ATPase catalytic subunit A"/>
    <property type="match status" value="1"/>
</dbReference>
<dbReference type="FunFam" id="2.40.50.100:FF:000008">
    <property type="entry name" value="V-type proton ATPase catalytic subunit A"/>
    <property type="match status" value="1"/>
</dbReference>
<dbReference type="FunFam" id="3.40.50.300:FF:000052">
    <property type="entry name" value="V-type proton ATPase catalytic subunit A"/>
    <property type="match status" value="1"/>
</dbReference>
<dbReference type="Gene3D" id="2.40.30.20">
    <property type="match status" value="1"/>
</dbReference>
<dbReference type="Gene3D" id="2.40.50.100">
    <property type="match status" value="1"/>
</dbReference>
<dbReference type="Gene3D" id="1.10.1140.10">
    <property type="entry name" value="Bovine Mitochondrial F1-atpase, Atp Synthase Beta Chain, Chain D, domain 3"/>
    <property type="match status" value="1"/>
</dbReference>
<dbReference type="Gene3D" id="3.40.50.300">
    <property type="entry name" value="P-loop containing nucleotide triphosphate hydrolases"/>
    <property type="match status" value="1"/>
</dbReference>
<dbReference type="HAMAP" id="MF_00309">
    <property type="entry name" value="ATP_synth_A_arch"/>
    <property type="match status" value="1"/>
</dbReference>
<dbReference type="InterPro" id="IPR055190">
    <property type="entry name" value="ATP-synt_VA_C"/>
</dbReference>
<dbReference type="InterPro" id="IPR031686">
    <property type="entry name" value="ATP-synth_a_Xtn"/>
</dbReference>
<dbReference type="InterPro" id="IPR023366">
    <property type="entry name" value="ATP_synth_asu-like_sf"/>
</dbReference>
<dbReference type="InterPro" id="IPR020003">
    <property type="entry name" value="ATPase_a/bsu_AS"/>
</dbReference>
<dbReference type="InterPro" id="IPR004100">
    <property type="entry name" value="ATPase_F1/V1/A1_a/bsu_N"/>
</dbReference>
<dbReference type="InterPro" id="IPR036121">
    <property type="entry name" value="ATPase_F1/V1/A1_a/bsu_N_sf"/>
</dbReference>
<dbReference type="InterPro" id="IPR000194">
    <property type="entry name" value="ATPase_F1/V1/A1_a/bsu_nucl-bd"/>
</dbReference>
<dbReference type="InterPro" id="IPR024034">
    <property type="entry name" value="ATPase_F1/V1_b/a_C"/>
</dbReference>
<dbReference type="InterPro" id="IPR005725">
    <property type="entry name" value="ATPase_V1-cplx_asu"/>
</dbReference>
<dbReference type="InterPro" id="IPR027417">
    <property type="entry name" value="P-loop_NTPase"/>
</dbReference>
<dbReference type="InterPro" id="IPR022878">
    <property type="entry name" value="V-ATPase_asu"/>
</dbReference>
<dbReference type="NCBIfam" id="NF003220">
    <property type="entry name" value="PRK04192.1"/>
    <property type="match status" value="1"/>
</dbReference>
<dbReference type="NCBIfam" id="TIGR01042">
    <property type="entry name" value="V-ATPase_V1_A"/>
    <property type="match status" value="1"/>
</dbReference>
<dbReference type="PANTHER" id="PTHR43607">
    <property type="entry name" value="V-TYPE PROTON ATPASE CATALYTIC SUBUNIT A"/>
    <property type="match status" value="1"/>
</dbReference>
<dbReference type="PANTHER" id="PTHR43607:SF9">
    <property type="entry name" value="V-TYPE PROTON ATPASE CATALYTIC SUBUNIT A"/>
    <property type="match status" value="1"/>
</dbReference>
<dbReference type="Pfam" id="PF00006">
    <property type="entry name" value="ATP-synt_ab"/>
    <property type="match status" value="1"/>
</dbReference>
<dbReference type="Pfam" id="PF02874">
    <property type="entry name" value="ATP-synt_ab_N"/>
    <property type="match status" value="1"/>
</dbReference>
<dbReference type="Pfam" id="PF16886">
    <property type="entry name" value="ATP-synt_ab_Xtn"/>
    <property type="match status" value="1"/>
</dbReference>
<dbReference type="Pfam" id="PF22919">
    <property type="entry name" value="ATP-synt_VA_C"/>
    <property type="match status" value="1"/>
</dbReference>
<dbReference type="SUPFAM" id="SSF47917">
    <property type="entry name" value="C-terminal domain of alpha and beta subunits of F1 ATP synthase"/>
    <property type="match status" value="1"/>
</dbReference>
<dbReference type="SUPFAM" id="SSF50615">
    <property type="entry name" value="N-terminal domain of alpha and beta subunits of F1 ATP synthase"/>
    <property type="match status" value="1"/>
</dbReference>
<dbReference type="SUPFAM" id="SSF52540">
    <property type="entry name" value="P-loop containing nucleoside triphosphate hydrolases"/>
    <property type="match status" value="1"/>
</dbReference>
<dbReference type="PROSITE" id="PS00152">
    <property type="entry name" value="ATPASE_ALPHA_BETA"/>
    <property type="match status" value="1"/>
</dbReference>